<proteinExistence type="inferred from homology"/>
<protein>
    <recommendedName>
        <fullName evidence="1">Pantothenate synthetase</fullName>
        <shortName evidence="1">PS</shortName>
        <ecNumber evidence="1">6.3.2.1</ecNumber>
    </recommendedName>
    <alternativeName>
        <fullName evidence="1">Pantoate--beta-alanine ligase</fullName>
    </alternativeName>
    <alternativeName>
        <fullName evidence="1">Pantoate-activating enzyme</fullName>
    </alternativeName>
</protein>
<name>PANC_BRASB</name>
<feature type="chain" id="PRO_0000305410" description="Pantothenate synthetase">
    <location>
        <begin position="1"/>
        <end position="283"/>
    </location>
</feature>
<feature type="active site" description="Proton donor" evidence="1">
    <location>
        <position position="41"/>
    </location>
</feature>
<feature type="binding site" evidence="1">
    <location>
        <begin position="34"/>
        <end position="41"/>
    </location>
    <ligand>
        <name>ATP</name>
        <dbReference type="ChEBI" id="CHEBI:30616"/>
    </ligand>
</feature>
<feature type="binding site" evidence="1">
    <location>
        <position position="65"/>
    </location>
    <ligand>
        <name>(R)-pantoate</name>
        <dbReference type="ChEBI" id="CHEBI:15980"/>
    </ligand>
</feature>
<feature type="binding site" evidence="1">
    <location>
        <position position="65"/>
    </location>
    <ligand>
        <name>beta-alanine</name>
        <dbReference type="ChEBI" id="CHEBI:57966"/>
    </ligand>
</feature>
<feature type="binding site" evidence="1">
    <location>
        <begin position="152"/>
        <end position="155"/>
    </location>
    <ligand>
        <name>ATP</name>
        <dbReference type="ChEBI" id="CHEBI:30616"/>
    </ligand>
</feature>
<feature type="binding site" evidence="1">
    <location>
        <position position="158"/>
    </location>
    <ligand>
        <name>(R)-pantoate</name>
        <dbReference type="ChEBI" id="CHEBI:15980"/>
    </ligand>
</feature>
<feature type="binding site" evidence="1">
    <location>
        <position position="181"/>
    </location>
    <ligand>
        <name>ATP</name>
        <dbReference type="ChEBI" id="CHEBI:30616"/>
    </ligand>
</feature>
<feature type="binding site" evidence="1">
    <location>
        <begin position="189"/>
        <end position="192"/>
    </location>
    <ligand>
        <name>ATP</name>
        <dbReference type="ChEBI" id="CHEBI:30616"/>
    </ligand>
</feature>
<gene>
    <name evidence="1" type="primary">panC</name>
    <name type="ordered locus">BBta_4783</name>
</gene>
<dbReference type="EC" id="6.3.2.1" evidence="1"/>
<dbReference type="EMBL" id="CP000494">
    <property type="protein sequence ID" value="ABQ36807.1"/>
    <property type="molecule type" value="Genomic_DNA"/>
</dbReference>
<dbReference type="RefSeq" id="WP_012044791.1">
    <property type="nucleotide sequence ID" value="NC_009485.1"/>
</dbReference>
<dbReference type="SMR" id="A5EKW3"/>
<dbReference type="STRING" id="288000.BBta_4783"/>
<dbReference type="KEGG" id="bbt:BBta_4783"/>
<dbReference type="eggNOG" id="COG0414">
    <property type="taxonomic scope" value="Bacteria"/>
</dbReference>
<dbReference type="HOGENOM" id="CLU_047148_0_2_5"/>
<dbReference type="OrthoDB" id="9773087at2"/>
<dbReference type="UniPathway" id="UPA00028">
    <property type="reaction ID" value="UER00005"/>
</dbReference>
<dbReference type="Proteomes" id="UP000000246">
    <property type="component" value="Chromosome"/>
</dbReference>
<dbReference type="GO" id="GO:0005829">
    <property type="term" value="C:cytosol"/>
    <property type="evidence" value="ECO:0007669"/>
    <property type="project" value="TreeGrafter"/>
</dbReference>
<dbReference type="GO" id="GO:0005524">
    <property type="term" value="F:ATP binding"/>
    <property type="evidence" value="ECO:0007669"/>
    <property type="project" value="UniProtKB-KW"/>
</dbReference>
<dbReference type="GO" id="GO:0004592">
    <property type="term" value="F:pantoate-beta-alanine ligase activity"/>
    <property type="evidence" value="ECO:0007669"/>
    <property type="project" value="UniProtKB-UniRule"/>
</dbReference>
<dbReference type="GO" id="GO:0015940">
    <property type="term" value="P:pantothenate biosynthetic process"/>
    <property type="evidence" value="ECO:0007669"/>
    <property type="project" value="UniProtKB-UniRule"/>
</dbReference>
<dbReference type="CDD" id="cd00560">
    <property type="entry name" value="PanC"/>
    <property type="match status" value="1"/>
</dbReference>
<dbReference type="FunFam" id="3.30.1300.10:FF:000001">
    <property type="entry name" value="Pantothenate synthetase"/>
    <property type="match status" value="1"/>
</dbReference>
<dbReference type="FunFam" id="3.40.50.620:FF:000114">
    <property type="entry name" value="Pantothenate synthetase"/>
    <property type="match status" value="1"/>
</dbReference>
<dbReference type="Gene3D" id="3.40.50.620">
    <property type="entry name" value="HUPs"/>
    <property type="match status" value="1"/>
</dbReference>
<dbReference type="Gene3D" id="3.30.1300.10">
    <property type="entry name" value="Pantoate-beta-alanine ligase, C-terminal domain"/>
    <property type="match status" value="1"/>
</dbReference>
<dbReference type="HAMAP" id="MF_00158">
    <property type="entry name" value="PanC"/>
    <property type="match status" value="1"/>
</dbReference>
<dbReference type="InterPro" id="IPR004821">
    <property type="entry name" value="Cyt_trans-like"/>
</dbReference>
<dbReference type="InterPro" id="IPR003721">
    <property type="entry name" value="Pantoate_ligase"/>
</dbReference>
<dbReference type="InterPro" id="IPR042176">
    <property type="entry name" value="Pantoate_ligase_C"/>
</dbReference>
<dbReference type="InterPro" id="IPR014729">
    <property type="entry name" value="Rossmann-like_a/b/a_fold"/>
</dbReference>
<dbReference type="NCBIfam" id="TIGR00125">
    <property type="entry name" value="cyt_tran_rel"/>
    <property type="match status" value="1"/>
</dbReference>
<dbReference type="NCBIfam" id="TIGR00018">
    <property type="entry name" value="panC"/>
    <property type="match status" value="1"/>
</dbReference>
<dbReference type="PANTHER" id="PTHR21299">
    <property type="entry name" value="CYTIDYLATE KINASE/PANTOATE-BETA-ALANINE LIGASE"/>
    <property type="match status" value="1"/>
</dbReference>
<dbReference type="PANTHER" id="PTHR21299:SF1">
    <property type="entry name" value="PANTOATE--BETA-ALANINE LIGASE"/>
    <property type="match status" value="1"/>
</dbReference>
<dbReference type="Pfam" id="PF02569">
    <property type="entry name" value="Pantoate_ligase"/>
    <property type="match status" value="1"/>
</dbReference>
<dbReference type="SUPFAM" id="SSF52374">
    <property type="entry name" value="Nucleotidylyl transferase"/>
    <property type="match status" value="1"/>
</dbReference>
<accession>A5EKW3</accession>
<keyword id="KW-0067">ATP-binding</keyword>
<keyword id="KW-0963">Cytoplasm</keyword>
<keyword id="KW-0436">Ligase</keyword>
<keyword id="KW-0547">Nucleotide-binding</keyword>
<keyword id="KW-0566">Pantothenate biosynthesis</keyword>
<keyword id="KW-1185">Reference proteome</keyword>
<evidence type="ECO:0000255" key="1">
    <source>
        <dbReference type="HAMAP-Rule" id="MF_00158"/>
    </source>
</evidence>
<organism>
    <name type="scientific">Bradyrhizobium sp. (strain BTAi1 / ATCC BAA-1182)</name>
    <dbReference type="NCBI Taxonomy" id="288000"/>
    <lineage>
        <taxon>Bacteria</taxon>
        <taxon>Pseudomonadati</taxon>
        <taxon>Pseudomonadota</taxon>
        <taxon>Alphaproteobacteria</taxon>
        <taxon>Hyphomicrobiales</taxon>
        <taxon>Nitrobacteraceae</taxon>
        <taxon>Bradyrhizobium</taxon>
    </lineage>
</organism>
<comment type="function">
    <text evidence="1">Catalyzes the condensation of pantoate with beta-alanine in an ATP-dependent reaction via a pantoyl-adenylate intermediate.</text>
</comment>
<comment type="catalytic activity">
    <reaction evidence="1">
        <text>(R)-pantoate + beta-alanine + ATP = (R)-pantothenate + AMP + diphosphate + H(+)</text>
        <dbReference type="Rhea" id="RHEA:10912"/>
        <dbReference type="ChEBI" id="CHEBI:15378"/>
        <dbReference type="ChEBI" id="CHEBI:15980"/>
        <dbReference type="ChEBI" id="CHEBI:29032"/>
        <dbReference type="ChEBI" id="CHEBI:30616"/>
        <dbReference type="ChEBI" id="CHEBI:33019"/>
        <dbReference type="ChEBI" id="CHEBI:57966"/>
        <dbReference type="ChEBI" id="CHEBI:456215"/>
        <dbReference type="EC" id="6.3.2.1"/>
    </reaction>
</comment>
<comment type="pathway">
    <text evidence="1">Cofactor biosynthesis; (R)-pantothenate biosynthesis; (R)-pantothenate from (R)-pantoate and beta-alanine: step 1/1.</text>
</comment>
<comment type="subunit">
    <text evidence="1">Homodimer.</text>
</comment>
<comment type="subcellular location">
    <subcellularLocation>
        <location evidence="1">Cytoplasm</location>
    </subcellularLocation>
</comment>
<comment type="miscellaneous">
    <text evidence="1">The reaction proceeds by a bi uni uni bi ping pong mechanism.</text>
</comment>
<comment type="similarity">
    <text evidence="1">Belongs to the pantothenate synthetase family.</text>
</comment>
<reference key="1">
    <citation type="journal article" date="2007" name="Science">
        <title>Legumes symbioses: absence of nod genes in photosynthetic bradyrhizobia.</title>
        <authorList>
            <person name="Giraud E."/>
            <person name="Moulin L."/>
            <person name="Vallenet D."/>
            <person name="Barbe V."/>
            <person name="Cytryn E."/>
            <person name="Avarre J.-C."/>
            <person name="Jaubert M."/>
            <person name="Simon D."/>
            <person name="Cartieaux F."/>
            <person name="Prin Y."/>
            <person name="Bena G."/>
            <person name="Hannibal L."/>
            <person name="Fardoux J."/>
            <person name="Kojadinovic M."/>
            <person name="Vuillet L."/>
            <person name="Lajus A."/>
            <person name="Cruveiller S."/>
            <person name="Rouy Z."/>
            <person name="Mangenot S."/>
            <person name="Segurens B."/>
            <person name="Dossat C."/>
            <person name="Franck W.L."/>
            <person name="Chang W.-S."/>
            <person name="Saunders E."/>
            <person name="Bruce D."/>
            <person name="Richardson P."/>
            <person name="Normand P."/>
            <person name="Dreyfus B."/>
            <person name="Pignol D."/>
            <person name="Stacey G."/>
            <person name="Emerich D."/>
            <person name="Vermeglio A."/>
            <person name="Medigue C."/>
            <person name="Sadowsky M."/>
        </authorList>
    </citation>
    <scope>NUCLEOTIDE SEQUENCE [LARGE SCALE GENOMIC DNA]</scope>
    <source>
        <strain>BTAi1 / ATCC BAA-1182</strain>
    </source>
</reference>
<sequence length="283" mass="31337">MSRTPRVARSLSALRRELDSLRARKATVALVPTMGALHDGHISLVRQAKRRADKVVVSIFVNPTQFAPTEDFGSYPRTWKEDVAKLAAERVDLIWHPDAKAMYPDGFTTRIVPEGPALAGLEDRFRPHFFGGVATVVAKLFAQCRPDVAIFGEKDYQQLRVVTQMARDLDLGVRVVGSRTVRERDGLAMSSRNVYLSADERRVAPTLHRALKELASRLRAGGDMQDALRDGNATITQAGFDLDYLEVRHAETLAPVTQDESGPKRILVAARIGTTRLIDNIAV</sequence>